<keyword id="KW-0066">ATP synthesis</keyword>
<keyword id="KW-0997">Cell inner membrane</keyword>
<keyword id="KW-1003">Cell membrane</keyword>
<keyword id="KW-0138">CF(0)</keyword>
<keyword id="KW-0375">Hydrogen ion transport</keyword>
<keyword id="KW-0406">Ion transport</keyword>
<keyword id="KW-0446">Lipid-binding</keyword>
<keyword id="KW-0472">Membrane</keyword>
<keyword id="KW-1185">Reference proteome</keyword>
<keyword id="KW-0812">Transmembrane</keyword>
<keyword id="KW-1133">Transmembrane helix</keyword>
<keyword id="KW-0813">Transport</keyword>
<feature type="chain" id="PRO_1000184490" description="ATP synthase subunit c">
    <location>
        <begin position="1"/>
        <end position="74"/>
    </location>
</feature>
<feature type="transmembrane region" description="Helical" evidence="1">
    <location>
        <begin position="5"/>
        <end position="25"/>
    </location>
</feature>
<feature type="transmembrane region" description="Helical" evidence="1">
    <location>
        <begin position="49"/>
        <end position="69"/>
    </location>
</feature>
<feature type="site" description="Reversibly protonated during proton transport" evidence="1">
    <location>
        <position position="57"/>
    </location>
</feature>
<evidence type="ECO:0000255" key="1">
    <source>
        <dbReference type="HAMAP-Rule" id="MF_01396"/>
    </source>
</evidence>
<protein>
    <recommendedName>
        <fullName evidence="1">ATP synthase subunit c</fullName>
    </recommendedName>
    <alternativeName>
        <fullName evidence="1">ATP synthase F(0) sector subunit c</fullName>
    </alternativeName>
    <alternativeName>
        <fullName evidence="1">F-type ATPase subunit c</fullName>
        <shortName evidence="1">F-ATPase subunit c</shortName>
    </alternativeName>
    <alternativeName>
        <fullName evidence="1">Lipid-binding protein</fullName>
    </alternativeName>
</protein>
<reference key="1">
    <citation type="journal article" date="2004" name="Nature">
        <title>Genome sequence of Silicibacter pomeroyi reveals adaptations to the marine environment.</title>
        <authorList>
            <person name="Moran M.A."/>
            <person name="Buchan A."/>
            <person name="Gonzalez J.M."/>
            <person name="Heidelberg J.F."/>
            <person name="Whitman W.B."/>
            <person name="Kiene R.P."/>
            <person name="Henriksen J.R."/>
            <person name="King G.M."/>
            <person name="Belas R."/>
            <person name="Fuqua C."/>
            <person name="Brinkac L.M."/>
            <person name="Lewis M."/>
            <person name="Johri S."/>
            <person name="Weaver B."/>
            <person name="Pai G."/>
            <person name="Eisen J.A."/>
            <person name="Rahe E."/>
            <person name="Sheldon W.M."/>
            <person name="Ye W."/>
            <person name="Miller T.R."/>
            <person name="Carlton J."/>
            <person name="Rasko D.A."/>
            <person name="Paulsen I.T."/>
            <person name="Ren Q."/>
            <person name="Daugherty S.C."/>
            <person name="DeBoy R.T."/>
            <person name="Dodson R.J."/>
            <person name="Durkin A.S."/>
            <person name="Madupu R."/>
            <person name="Nelson W.C."/>
            <person name="Sullivan S.A."/>
            <person name="Rosovitz M.J."/>
            <person name="Haft D.H."/>
            <person name="Selengut J."/>
            <person name="Ward N."/>
        </authorList>
    </citation>
    <scope>NUCLEOTIDE SEQUENCE [LARGE SCALE GENOMIC DNA]</scope>
    <source>
        <strain>ATCC 700808 / DSM 15171 / DSS-3</strain>
    </source>
</reference>
<reference key="2">
    <citation type="journal article" date="2014" name="Stand. Genomic Sci.">
        <title>An updated genome annotation for the model marine bacterium Ruegeria pomeroyi DSS-3.</title>
        <authorList>
            <person name="Rivers A.R."/>
            <person name="Smith C.B."/>
            <person name="Moran M.A."/>
        </authorList>
    </citation>
    <scope>GENOME REANNOTATION</scope>
    <source>
        <strain>ATCC 700808 / DSM 15171 / DSS-3</strain>
    </source>
</reference>
<gene>
    <name evidence="1" type="primary">atpE</name>
    <name type="ordered locus">SPO3235</name>
</gene>
<dbReference type="EMBL" id="CP000031">
    <property type="protein sequence ID" value="AAV96470.1"/>
    <property type="molecule type" value="Genomic_DNA"/>
</dbReference>
<dbReference type="RefSeq" id="WP_011048925.1">
    <property type="nucleotide sequence ID" value="NC_003911.12"/>
</dbReference>
<dbReference type="SMR" id="Q5LNH0"/>
<dbReference type="STRING" id="246200.SPO3235"/>
<dbReference type="PaxDb" id="246200-SPO3235"/>
<dbReference type="DNASU" id="3195970"/>
<dbReference type="KEGG" id="sil:SPO3235"/>
<dbReference type="eggNOG" id="COG0636">
    <property type="taxonomic scope" value="Bacteria"/>
</dbReference>
<dbReference type="HOGENOM" id="CLU_148047_4_0_5"/>
<dbReference type="OrthoDB" id="9811093at2"/>
<dbReference type="Proteomes" id="UP000001023">
    <property type="component" value="Chromosome"/>
</dbReference>
<dbReference type="GO" id="GO:0005886">
    <property type="term" value="C:plasma membrane"/>
    <property type="evidence" value="ECO:0007669"/>
    <property type="project" value="UniProtKB-SubCell"/>
</dbReference>
<dbReference type="GO" id="GO:0045259">
    <property type="term" value="C:proton-transporting ATP synthase complex"/>
    <property type="evidence" value="ECO:0007669"/>
    <property type="project" value="UniProtKB-KW"/>
</dbReference>
<dbReference type="GO" id="GO:0033177">
    <property type="term" value="C:proton-transporting two-sector ATPase complex, proton-transporting domain"/>
    <property type="evidence" value="ECO:0007669"/>
    <property type="project" value="InterPro"/>
</dbReference>
<dbReference type="GO" id="GO:0008289">
    <property type="term" value="F:lipid binding"/>
    <property type="evidence" value="ECO:0007669"/>
    <property type="project" value="UniProtKB-KW"/>
</dbReference>
<dbReference type="GO" id="GO:0046933">
    <property type="term" value="F:proton-transporting ATP synthase activity, rotational mechanism"/>
    <property type="evidence" value="ECO:0007669"/>
    <property type="project" value="UniProtKB-UniRule"/>
</dbReference>
<dbReference type="Gene3D" id="1.20.20.10">
    <property type="entry name" value="F1F0 ATP synthase subunit C"/>
    <property type="match status" value="1"/>
</dbReference>
<dbReference type="HAMAP" id="MF_01396">
    <property type="entry name" value="ATP_synth_c_bact"/>
    <property type="match status" value="1"/>
</dbReference>
<dbReference type="InterPro" id="IPR000454">
    <property type="entry name" value="ATP_synth_F0_csu"/>
</dbReference>
<dbReference type="InterPro" id="IPR038662">
    <property type="entry name" value="ATP_synth_F0_csu_sf"/>
</dbReference>
<dbReference type="InterPro" id="IPR002379">
    <property type="entry name" value="ATPase_proteolipid_c-like_dom"/>
</dbReference>
<dbReference type="InterPro" id="IPR035921">
    <property type="entry name" value="F/V-ATP_Csub_sf"/>
</dbReference>
<dbReference type="NCBIfam" id="NF005733">
    <property type="entry name" value="PRK07558.1"/>
    <property type="match status" value="1"/>
</dbReference>
<dbReference type="PANTHER" id="PTHR10031">
    <property type="entry name" value="ATP SYNTHASE LIPID-BINDING PROTEIN, MITOCHONDRIAL"/>
    <property type="match status" value="1"/>
</dbReference>
<dbReference type="PANTHER" id="PTHR10031:SF0">
    <property type="entry name" value="ATPASE PROTEIN 9"/>
    <property type="match status" value="1"/>
</dbReference>
<dbReference type="Pfam" id="PF00137">
    <property type="entry name" value="ATP-synt_C"/>
    <property type="match status" value="1"/>
</dbReference>
<dbReference type="PRINTS" id="PR00124">
    <property type="entry name" value="ATPASEC"/>
</dbReference>
<dbReference type="SUPFAM" id="SSF81333">
    <property type="entry name" value="F1F0 ATP synthase subunit C"/>
    <property type="match status" value="1"/>
</dbReference>
<name>ATPL_RUEPO</name>
<proteinExistence type="inferred from homology"/>
<comment type="function">
    <text evidence="1">F(1)F(0) ATP synthase produces ATP from ADP in the presence of a proton or sodium gradient. F-type ATPases consist of two structural domains, F(1) containing the extramembraneous catalytic core and F(0) containing the membrane proton channel, linked together by a central stalk and a peripheral stalk. During catalysis, ATP synthesis in the catalytic domain of F(1) is coupled via a rotary mechanism of the central stalk subunits to proton translocation.</text>
</comment>
<comment type="function">
    <text evidence="1">Key component of the F(0) channel; it plays a direct role in translocation across the membrane. A homomeric c-ring of between 10-14 subunits forms the central stalk rotor element with the F(1) delta and epsilon subunits.</text>
</comment>
<comment type="subunit">
    <text evidence="1">F-type ATPases have 2 components, F(1) - the catalytic core - and F(0) - the membrane proton channel. F(1) has five subunits: alpha(3), beta(3), gamma(1), delta(1), epsilon(1). F(0) has three main subunits: a(1), b(2) and c(10-14). The alpha and beta chains form an alternating ring which encloses part of the gamma chain. F(1) is attached to F(0) by a central stalk formed by the gamma and epsilon chains, while a peripheral stalk is formed by the delta and b chains.</text>
</comment>
<comment type="subcellular location">
    <subcellularLocation>
        <location evidence="1">Cell inner membrane</location>
        <topology evidence="1">Multi-pass membrane protein</topology>
    </subcellularLocation>
</comment>
<comment type="similarity">
    <text evidence="1">Belongs to the ATPase C chain family.</text>
</comment>
<accession>Q5LNH0</accession>
<organism>
    <name type="scientific">Ruegeria pomeroyi (strain ATCC 700808 / DSM 15171 / DSS-3)</name>
    <name type="common">Silicibacter pomeroyi</name>
    <dbReference type="NCBI Taxonomy" id="246200"/>
    <lineage>
        <taxon>Bacteria</taxon>
        <taxon>Pseudomonadati</taxon>
        <taxon>Pseudomonadota</taxon>
        <taxon>Alphaproteobacteria</taxon>
        <taxon>Rhodobacterales</taxon>
        <taxon>Roseobacteraceae</taxon>
        <taxon>Ruegeria</taxon>
    </lineage>
</organism>
<sequence length="74" mass="7117">MEGDLAHIGAGLAAIGSGAAAIGVGNVAGNFLAGALRNPSAAASQTATLFIGIAFAEALGIFAFLVALLLMFAV</sequence>